<gene>
    <name evidence="4" type="primary">TPS-mISO1</name>
</gene>
<proteinExistence type="evidence at protein level"/>
<keyword id="KW-0150">Chloroplast</keyword>
<keyword id="KW-0456">Lyase</keyword>
<keyword id="KW-0460">Magnesium</keyword>
<keyword id="KW-0479">Metal-binding</keyword>
<keyword id="KW-0611">Plant defense</keyword>
<keyword id="KW-0934">Plastid</keyword>
<keyword id="KW-0809">Transit peptide</keyword>
<name>MISO1_PINCO</name>
<protein>
    <recommendedName>
        <fullName evidence="4">Monofunctional isopimaradiene synthase, chloroplastic</fullName>
        <shortName evidence="4">PcmIso1</shortName>
        <ecNumber evidence="3">4.2.3.44</ecNumber>
    </recommendedName>
</protein>
<feature type="transit peptide" description="Chloroplast" evidence="2">
    <location>
        <begin position="1"/>
        <end position="64"/>
    </location>
</feature>
<feature type="chain" id="PRO_0000431413" description="Monofunctional isopimaradiene synthase, chloroplastic">
    <location>
        <begin position="65"/>
        <end position="876"/>
    </location>
</feature>
<feature type="short sequence motif" description="DDXXD motif" evidence="5">
    <location>
        <begin position="628"/>
        <end position="632"/>
    </location>
</feature>
<feature type="binding site" evidence="1">
    <location>
        <position position="628"/>
    </location>
    <ligand>
        <name>Mg(2+)</name>
        <dbReference type="ChEBI" id="CHEBI:18420"/>
        <label>1</label>
    </ligand>
</feature>
<feature type="binding site" evidence="1">
    <location>
        <position position="628"/>
    </location>
    <ligand>
        <name>Mg(2+)</name>
        <dbReference type="ChEBI" id="CHEBI:18420"/>
        <label>2</label>
    </ligand>
</feature>
<feature type="binding site" evidence="1">
    <location>
        <position position="632"/>
    </location>
    <ligand>
        <name>Mg(2+)</name>
        <dbReference type="ChEBI" id="CHEBI:18420"/>
        <label>1</label>
    </ligand>
</feature>
<feature type="binding site" evidence="1">
    <location>
        <position position="632"/>
    </location>
    <ligand>
        <name>Mg(2+)</name>
        <dbReference type="ChEBI" id="CHEBI:18420"/>
        <label>2</label>
    </ligand>
</feature>
<feature type="binding site" evidence="1">
    <location>
        <position position="772"/>
    </location>
    <ligand>
        <name>Mg(2+)</name>
        <dbReference type="ChEBI" id="CHEBI:18420"/>
        <label>3</label>
    </ligand>
</feature>
<feature type="binding site" evidence="1">
    <location>
        <position position="776"/>
    </location>
    <ligand>
        <name>Mg(2+)</name>
        <dbReference type="ChEBI" id="CHEBI:18420"/>
        <label>3</label>
    </ligand>
</feature>
<feature type="binding site" evidence="1">
    <location>
        <position position="780"/>
    </location>
    <ligand>
        <name>Mg(2+)</name>
        <dbReference type="ChEBI" id="CHEBI:18420"/>
        <label>3</label>
    </ligand>
</feature>
<sequence length="876" mass="100687">MAMPSYSSLSSHISITTTHTRPHPIFPCYNDTQSIPRFFISSDTGSSASKQRNIYLRLGSRKIIAGVGEGATSLSSHSDKMKTDSFPDPKLAKRDFPPGFWKDDIIDSIMSSNKVAAADEERVETLISEIKSMFRGMGDGETTPSAYDTAWVAKIPALDGSDHPHFPQTLQWILRNQLKDGSWGEEHHFLTYDRLLATLACIITLTVWRTGKTQVQKGIEFFKKHAAMMEDEADHRQPSGFEFVFPAMINEAKSLCLDLPYELPFIKQIIKKREAKLKRIPTDLLYTVPTIFLYYLEGLQEIVEWHKIIKLQSKDGSFLSSPASTAAVFMSTGNTKCLEFLNFVLMKFGNHAPCHYPIDLLERLWAVDTVQRLGIDRYFKEEIKEALDYIYSHWGERGIGWARENPVADIGVTAMGLRILRLNGYNVSSDVLRTFRDENGEFFSFMGQTERGVIDMLNLNRCSHVAFPGETVMEEAKHCTERYLWNALEDVDALDKWGLKKNIRGEVEYALKYPWLRSLPRLEARSYIENYGPNDAWLGKTMYIMPYINNGKYLELAKLDFNNVQSIHQKELRELRRWWKSSGFAELDFTRDRVAEIFFSIASSMFEPELATCRDVYTKSTICTVVLDDLYDAHGSVEDIKLFNEAVKRWDLFLLDRMPEHIKICFLGLYNLVNEIAEEGRKRQGRDVLGYIRNLWEIQLETFMKEAEWSEAKYVPSFHEYIETASVSIAGATLVLFGVLFTGEVLTDHILSQIDYRSKFAYLMGLTGRLINDTKTYQAERGEGEVASAIQCYMKDHPEFSEEEALKQIYTLMENALSDLKEEFLKAKDVPDKCKRLVFDYARSMQLFYQQGDGFTLAPNMEIKQHVKKILFEPVP</sequence>
<comment type="function">
    <text evidence="3">Involved in defensive oleoresin formation in conifers in response to insect attack or other injury. Involved in diterpene (C20) olefins biosynthesis. Monofunctional enzyme lacking the DXDD motif in the class II active site relevant for the cyclization of geranylgeranyl diphosphate (GGPP). Requires (+)-copalyl diphosphate ((+)-CPP) as substrate, but no activity with GGPP or ent-CPP. Isopimaradiene is the major products of the enzyme followed by sandaracopimaradiene.</text>
</comment>
<comment type="catalytic activity">
    <reaction evidence="3">
        <text>(+)-copalyl diphosphate = isopimara-7,15-diene + diphosphate</text>
        <dbReference type="Rhea" id="RHEA:26128"/>
        <dbReference type="ChEBI" id="CHEBI:33019"/>
        <dbReference type="ChEBI" id="CHEBI:52280"/>
        <dbReference type="ChEBI" id="CHEBI:58635"/>
        <dbReference type="EC" id="4.2.3.44"/>
    </reaction>
</comment>
<comment type="cofactor">
    <cofactor evidence="1">
        <name>Mg(2+)</name>
        <dbReference type="ChEBI" id="CHEBI:18420"/>
    </cofactor>
    <text evidence="1">Binds 3 Mg(2+) ions per subunit.</text>
</comment>
<comment type="pathway">
    <text evidence="5">Terpene metabolism; oleoresin biosynthesis.</text>
</comment>
<comment type="subcellular location">
    <subcellularLocation>
        <location evidence="2">Plastid</location>
        <location evidence="2">Chloroplast</location>
    </subcellularLocation>
</comment>
<comment type="domain">
    <text evidence="5">The Asp-Asp-Xaa-Xaa-Asp/Glu (DDXXD/E) motif is important for the catalytic activity in the class I active site, presumably through binding to Mg(2+).</text>
</comment>
<comment type="similarity">
    <text evidence="5">Belongs to the terpene synthase family. Tpsd subfamily.</text>
</comment>
<evidence type="ECO:0000250" key="1">
    <source>
        <dbReference type="UniProtKB" id="Q40577"/>
    </source>
</evidence>
<evidence type="ECO:0000255" key="2"/>
<evidence type="ECO:0000269" key="3">
    <source>
    </source>
</evidence>
<evidence type="ECO:0000303" key="4">
    <source>
    </source>
</evidence>
<evidence type="ECO:0000305" key="5"/>
<evidence type="ECO:0000312" key="6">
    <source>
        <dbReference type="EMBL" id="AFU73866.1"/>
    </source>
</evidence>
<dbReference type="EC" id="4.2.3.44" evidence="3"/>
<dbReference type="EMBL" id="JQ240314">
    <property type="protein sequence ID" value="AFU73866.1"/>
    <property type="molecule type" value="mRNA"/>
</dbReference>
<dbReference type="SMR" id="M4HYP3"/>
<dbReference type="BRENDA" id="4.2.3.B25">
    <property type="organism ID" value="4843"/>
</dbReference>
<dbReference type="UniPathway" id="UPA00924"/>
<dbReference type="GO" id="GO:0009507">
    <property type="term" value="C:chloroplast"/>
    <property type="evidence" value="ECO:0007669"/>
    <property type="project" value="UniProtKB-SubCell"/>
</dbReference>
<dbReference type="GO" id="GO:0000287">
    <property type="term" value="F:magnesium ion binding"/>
    <property type="evidence" value="ECO:0007669"/>
    <property type="project" value="InterPro"/>
</dbReference>
<dbReference type="GO" id="GO:0010333">
    <property type="term" value="F:terpene synthase activity"/>
    <property type="evidence" value="ECO:0007669"/>
    <property type="project" value="InterPro"/>
</dbReference>
<dbReference type="GO" id="GO:0006952">
    <property type="term" value="P:defense response"/>
    <property type="evidence" value="ECO:0007669"/>
    <property type="project" value="UniProtKB-KW"/>
</dbReference>
<dbReference type="GO" id="GO:0016102">
    <property type="term" value="P:diterpenoid biosynthetic process"/>
    <property type="evidence" value="ECO:0007669"/>
    <property type="project" value="InterPro"/>
</dbReference>
<dbReference type="CDD" id="cd00684">
    <property type="entry name" value="Terpene_cyclase_plant_C1"/>
    <property type="match status" value="1"/>
</dbReference>
<dbReference type="FunFam" id="1.50.10.130:FF:000002">
    <property type="entry name" value="Ent-copalyl diphosphate synthase, chloroplastic"/>
    <property type="match status" value="1"/>
</dbReference>
<dbReference type="FunFam" id="1.10.600.10:FF:000005">
    <property type="entry name" value="Ent-kaur-16-ene synthase, chloroplastic"/>
    <property type="match status" value="1"/>
</dbReference>
<dbReference type="Gene3D" id="1.50.10.160">
    <property type="match status" value="1"/>
</dbReference>
<dbReference type="Gene3D" id="1.10.600.10">
    <property type="entry name" value="Farnesyl Diphosphate Synthase"/>
    <property type="match status" value="1"/>
</dbReference>
<dbReference type="Gene3D" id="1.50.10.130">
    <property type="entry name" value="Terpene synthase, N-terminal domain"/>
    <property type="match status" value="1"/>
</dbReference>
<dbReference type="InterPro" id="IPR008949">
    <property type="entry name" value="Isoprenoid_synthase_dom_sf"/>
</dbReference>
<dbReference type="InterPro" id="IPR034741">
    <property type="entry name" value="Terpene_cyclase-like_1_C"/>
</dbReference>
<dbReference type="InterPro" id="IPR044814">
    <property type="entry name" value="Terpene_cyclase_plant_C1"/>
</dbReference>
<dbReference type="InterPro" id="IPR001906">
    <property type="entry name" value="Terpene_synth_N"/>
</dbReference>
<dbReference type="InterPro" id="IPR036965">
    <property type="entry name" value="Terpene_synth_N_sf"/>
</dbReference>
<dbReference type="InterPro" id="IPR050148">
    <property type="entry name" value="Terpene_synthase-like"/>
</dbReference>
<dbReference type="InterPro" id="IPR005630">
    <property type="entry name" value="Terpene_synthase_metal-bd"/>
</dbReference>
<dbReference type="InterPro" id="IPR008930">
    <property type="entry name" value="Terpenoid_cyclase/PrenylTrfase"/>
</dbReference>
<dbReference type="PANTHER" id="PTHR31739:SF25">
    <property type="entry name" value="(E,E)-GERANYLLINALOOL SYNTHASE"/>
    <property type="match status" value="1"/>
</dbReference>
<dbReference type="PANTHER" id="PTHR31739">
    <property type="entry name" value="ENT-COPALYL DIPHOSPHATE SYNTHASE, CHLOROPLASTIC"/>
    <property type="match status" value="1"/>
</dbReference>
<dbReference type="Pfam" id="PF01397">
    <property type="entry name" value="Terpene_synth"/>
    <property type="match status" value="1"/>
</dbReference>
<dbReference type="Pfam" id="PF03936">
    <property type="entry name" value="Terpene_synth_C"/>
    <property type="match status" value="1"/>
</dbReference>
<dbReference type="SFLD" id="SFLDS00005">
    <property type="entry name" value="Isoprenoid_Synthase_Type_I"/>
    <property type="match status" value="1"/>
</dbReference>
<dbReference type="SFLD" id="SFLDG01019">
    <property type="entry name" value="Terpene_Cyclase_Like_1_C_Termi"/>
    <property type="match status" value="1"/>
</dbReference>
<dbReference type="SFLD" id="SFLDG01014">
    <property type="entry name" value="Terpene_Cyclase_Like_1_N-term"/>
    <property type="match status" value="1"/>
</dbReference>
<dbReference type="SUPFAM" id="SSF48239">
    <property type="entry name" value="Terpenoid cyclases/Protein prenyltransferases"/>
    <property type="match status" value="2"/>
</dbReference>
<dbReference type="SUPFAM" id="SSF48576">
    <property type="entry name" value="Terpenoid synthases"/>
    <property type="match status" value="1"/>
</dbReference>
<reference key="1">
    <citation type="journal article" date="2013" name="Plant Physiol.">
        <title>Evolution of conifer diterpene synthases: diterpene resin acid biosynthesis in lodgepole pine and jack pine involves monofunctional and bifunctional diterpene synthases.</title>
        <authorList>
            <person name="Hall D.E."/>
            <person name="Zerbe P."/>
            <person name="Jancsik S."/>
            <person name="Quesada A.L."/>
            <person name="Dullat H."/>
            <person name="Madilao L.L."/>
            <person name="Yuen M."/>
            <person name="Bohlmann J."/>
        </authorList>
    </citation>
    <scope>NUCLEOTIDE SEQUENCE [MRNA]</scope>
    <scope>FUNCTION</scope>
    <scope>CATALYTIC ACTIVITY</scope>
</reference>
<organism evidence="6">
    <name type="scientific">Pinus contorta</name>
    <name type="common">Shore pine</name>
    <name type="synonym">Lodgepole pine</name>
    <dbReference type="NCBI Taxonomy" id="3339"/>
    <lineage>
        <taxon>Eukaryota</taxon>
        <taxon>Viridiplantae</taxon>
        <taxon>Streptophyta</taxon>
        <taxon>Embryophyta</taxon>
        <taxon>Tracheophyta</taxon>
        <taxon>Spermatophyta</taxon>
        <taxon>Pinopsida</taxon>
        <taxon>Pinidae</taxon>
        <taxon>Conifers I</taxon>
        <taxon>Pinales</taxon>
        <taxon>Pinaceae</taxon>
        <taxon>Pinus</taxon>
        <taxon>Pinus subgen. Pinus</taxon>
    </lineage>
</organism>
<accession>M4HYP3</accession>